<proteinExistence type="inferred from homology"/>
<reference key="1">
    <citation type="journal article" date="2019" name="Toxins">
        <title>The diversified O-superfamily in Californiconus californicus presents a conotoxin with antimycobacterial activity.</title>
        <authorList>
            <person name="Bernaldez-Sarabia J."/>
            <person name="Figueroa-Montiel A."/>
            <person name="Duenas S."/>
            <person name="Cervantes-Luevano K."/>
            <person name="Beltran J.A."/>
            <person name="Ortiz E."/>
            <person name="Jimenez S."/>
            <person name="Possani L.D."/>
            <person name="Paniagua-Solis J.F."/>
            <person name="Gonzalez-Canudas J."/>
            <person name="Licea-Navarro A."/>
        </authorList>
    </citation>
    <scope>NUCLEOTIDE SEQUENCE [MRNA]</scope>
    <source>
        <tissue>Venom duct</tissue>
    </source>
</reference>
<evidence type="ECO:0000255" key="1"/>
<evidence type="ECO:0000303" key="2">
    <source>
    </source>
</evidence>
<evidence type="ECO:0000305" key="3"/>
<evidence type="ECO:0000305" key="4">
    <source>
    </source>
</evidence>
<sequence length="53" mass="5781">MKLTCVLIAAVLLLAVCQLDSADAITRDCKTKGYACFASTECCVQDCWLVCLY</sequence>
<protein>
    <recommendedName>
        <fullName evidence="3">Conotoxin Cal6.31</fullName>
    </recommendedName>
    <alternativeName>
        <fullName evidence="2">O1_cal6.31</fullName>
    </alternativeName>
</protein>
<dbReference type="SMR" id="P0DTZ3"/>
<dbReference type="GO" id="GO:0005576">
    <property type="term" value="C:extracellular region"/>
    <property type="evidence" value="ECO:0007669"/>
    <property type="project" value="UniProtKB-SubCell"/>
</dbReference>
<dbReference type="GO" id="GO:0090729">
    <property type="term" value="F:toxin activity"/>
    <property type="evidence" value="ECO:0007669"/>
    <property type="project" value="UniProtKB-KW"/>
</dbReference>
<feature type="signal peptide" evidence="1">
    <location>
        <begin position="1"/>
        <end position="24"/>
    </location>
</feature>
<feature type="peptide" id="PRO_0000450975" description="Conotoxin Cal6.31">
    <location>
        <begin position="25"/>
        <end position="53"/>
    </location>
</feature>
<feature type="disulfide bond" evidence="3">
    <location>
        <begin position="29"/>
        <end position="43"/>
    </location>
</feature>
<feature type="disulfide bond" evidence="3">
    <location>
        <begin position="36"/>
        <end position="47"/>
    </location>
</feature>
<feature type="disulfide bond" evidence="3">
    <location>
        <begin position="42"/>
        <end position="51"/>
    </location>
</feature>
<organism>
    <name type="scientific">Californiconus californicus</name>
    <name type="common">California cone</name>
    <name type="synonym">Conus californicus</name>
    <dbReference type="NCBI Taxonomy" id="1736779"/>
    <lineage>
        <taxon>Eukaryota</taxon>
        <taxon>Metazoa</taxon>
        <taxon>Spiralia</taxon>
        <taxon>Lophotrochozoa</taxon>
        <taxon>Mollusca</taxon>
        <taxon>Gastropoda</taxon>
        <taxon>Caenogastropoda</taxon>
        <taxon>Neogastropoda</taxon>
        <taxon>Conoidea</taxon>
        <taxon>Conidae</taxon>
        <taxon>Californiconus</taxon>
    </lineage>
</organism>
<comment type="function">
    <text evidence="3">Probable neurotoxin.</text>
</comment>
<comment type="subcellular location">
    <subcellularLocation>
        <location evidence="4">Secreted</location>
    </subcellularLocation>
</comment>
<comment type="tissue specificity">
    <text evidence="4">Expressed by the venom duct.</text>
</comment>
<comment type="domain">
    <text evidence="3">The cysteine framework is VI/VII (C-C-CC-C-C).</text>
</comment>
<comment type="domain">
    <text evidence="3">The presence of a 'disulfide through disulfide knot' structurally defines this protein as a knottin.</text>
</comment>
<comment type="similarity">
    <text evidence="3">Belongs to the conotoxin O1 superfamily.</text>
</comment>
<name>O1631_CONCL</name>
<accession>P0DTZ3</accession>
<keyword id="KW-1015">Disulfide bond</keyword>
<keyword id="KW-0960">Knottin</keyword>
<keyword id="KW-0528">Neurotoxin</keyword>
<keyword id="KW-0964">Secreted</keyword>
<keyword id="KW-0732">Signal</keyword>
<keyword id="KW-0800">Toxin</keyword>